<accession>P05589</accession>
<comment type="subcellular location">
    <subcellularLocation>
        <location>Secreted</location>
    </subcellularLocation>
</comment>
<comment type="domain">
    <text>Avian ovomucoid consists of three homologous, tandem Kazal family inhibitory domains.</text>
</comment>
<protein>
    <recommendedName>
        <fullName>Ovomucoid</fullName>
    </recommendedName>
</protein>
<keyword id="KW-0903">Direct protein sequencing</keyword>
<keyword id="KW-1015">Disulfide bond</keyword>
<keyword id="KW-0325">Glycoprotein</keyword>
<keyword id="KW-0646">Protease inhibitor</keyword>
<keyword id="KW-0677">Repeat</keyword>
<keyword id="KW-0964">Secreted</keyword>
<keyword id="KW-0722">Serine protease inhibitor</keyword>
<evidence type="ECO:0000255" key="1">
    <source>
        <dbReference type="PROSITE-ProRule" id="PRU00798"/>
    </source>
</evidence>
<sequence>FAAVSVDCSEYPKPDCTLEYRPLCGSDNKTYANKCNFCNAVVESNGTLTLSHFGKC</sequence>
<name>IOVO_CALSC</name>
<reference key="1">
    <citation type="journal article" date="1987" name="Biochemistry">
        <title>Ovomucoid third domains from 100 avian species: isolation, sequences, and hypervariability of enzyme-inhibitor contact residues.</title>
        <authorList>
            <person name="Laskowski M. Jr."/>
            <person name="Kato I."/>
            <person name="Ardelt W."/>
            <person name="Cook J."/>
            <person name="Denton A."/>
            <person name="Empie M.W."/>
            <person name="Kohr W.J."/>
            <person name="Park S.J."/>
            <person name="Parks K."/>
            <person name="Schatzley B.L."/>
            <person name="Schoenberger O.L."/>
            <person name="Tashiro M."/>
            <person name="Vichot G."/>
            <person name="Whatley H.E."/>
            <person name="Wieczorek A."/>
            <person name="Wieczorek M."/>
        </authorList>
    </citation>
    <scope>PROTEIN SEQUENCE</scope>
</reference>
<reference key="2">
    <citation type="journal article" date="1982" name="Biochemistry">
        <title>Thermodynamics and kinetics of single residue replacements in avian ovomucoid third domains: effect on inhibitor interactions with serine proteinases.</title>
        <authorList>
            <person name="Empie M.W."/>
            <person name="Laskowski M. Jr."/>
        </authorList>
    </citation>
    <scope>PROTEIN SEQUENCE</scope>
</reference>
<dbReference type="PIR" id="E31445">
    <property type="entry name" value="E31445"/>
</dbReference>
<dbReference type="BMRB" id="P05589"/>
<dbReference type="SMR" id="P05589"/>
<dbReference type="GO" id="GO:0005576">
    <property type="term" value="C:extracellular region"/>
    <property type="evidence" value="ECO:0007669"/>
    <property type="project" value="UniProtKB-SubCell"/>
</dbReference>
<dbReference type="GO" id="GO:0004867">
    <property type="term" value="F:serine-type endopeptidase inhibitor activity"/>
    <property type="evidence" value="ECO:0007669"/>
    <property type="project" value="UniProtKB-KW"/>
</dbReference>
<dbReference type="CDD" id="cd00104">
    <property type="entry name" value="KAZAL_FS"/>
    <property type="match status" value="1"/>
</dbReference>
<dbReference type="FunFam" id="3.30.60.30:FF:000037">
    <property type="entry name" value="Ovomucoid"/>
    <property type="match status" value="1"/>
</dbReference>
<dbReference type="Gene3D" id="3.30.60.30">
    <property type="match status" value="1"/>
</dbReference>
<dbReference type="InterPro" id="IPR051597">
    <property type="entry name" value="Bifunctional_prot_inhibitor"/>
</dbReference>
<dbReference type="InterPro" id="IPR002350">
    <property type="entry name" value="Kazal_dom"/>
</dbReference>
<dbReference type="InterPro" id="IPR036058">
    <property type="entry name" value="Kazal_dom_sf"/>
</dbReference>
<dbReference type="InterPro" id="IPR001239">
    <property type="entry name" value="Prot_inh_Kazal-m"/>
</dbReference>
<dbReference type="PANTHER" id="PTHR47729:SF1">
    <property type="entry name" value="OVOMUCOID-LIKE-RELATED"/>
    <property type="match status" value="1"/>
</dbReference>
<dbReference type="PANTHER" id="PTHR47729">
    <property type="entry name" value="SERINE PEPTIDASE INHIBITOR, KAZAL TYPE 2, TANDEM DUPLICATE 1-RELATED"/>
    <property type="match status" value="1"/>
</dbReference>
<dbReference type="Pfam" id="PF00050">
    <property type="entry name" value="Kazal_1"/>
    <property type="match status" value="1"/>
</dbReference>
<dbReference type="PRINTS" id="PR00290">
    <property type="entry name" value="KAZALINHBTR"/>
</dbReference>
<dbReference type="SMART" id="SM00280">
    <property type="entry name" value="KAZAL"/>
    <property type="match status" value="1"/>
</dbReference>
<dbReference type="SUPFAM" id="SSF100895">
    <property type="entry name" value="Kazal-type serine protease inhibitors"/>
    <property type="match status" value="1"/>
</dbReference>
<dbReference type="PROSITE" id="PS00282">
    <property type="entry name" value="KAZAL_1"/>
    <property type="match status" value="1"/>
</dbReference>
<dbReference type="PROSITE" id="PS51465">
    <property type="entry name" value="KAZAL_2"/>
    <property type="match status" value="1"/>
</dbReference>
<organism>
    <name type="scientific">Callipepla squamata castanogastris</name>
    <name type="common">Chestnut bellied scaled quail</name>
    <dbReference type="NCBI Taxonomy" id="9010"/>
    <lineage>
        <taxon>Eukaryota</taxon>
        <taxon>Metazoa</taxon>
        <taxon>Chordata</taxon>
        <taxon>Craniata</taxon>
        <taxon>Vertebrata</taxon>
        <taxon>Euteleostomi</taxon>
        <taxon>Archelosauria</taxon>
        <taxon>Archosauria</taxon>
        <taxon>Dinosauria</taxon>
        <taxon>Saurischia</taxon>
        <taxon>Theropoda</taxon>
        <taxon>Coelurosauria</taxon>
        <taxon>Aves</taxon>
        <taxon>Neognathae</taxon>
        <taxon>Galloanserae</taxon>
        <taxon>Galliformes</taxon>
        <taxon>Odontophoridae</taxon>
        <taxon>Callipepla</taxon>
    </lineage>
</organism>
<proteinExistence type="evidence at protein level"/>
<feature type="chain" id="PRO_0000073071" description="Ovomucoid">
    <location>
        <begin position="1" status="less than"/>
        <end position="56" status="greater than"/>
    </location>
</feature>
<feature type="domain" description="Kazal-like" evidence="1">
    <location>
        <begin position="6"/>
        <end position="56"/>
    </location>
</feature>
<feature type="site" description="Reactive bond 3">
    <location>
        <begin position="18"/>
        <end position="19"/>
    </location>
</feature>
<feature type="glycosylation site" description="N-linked (GlcNAc...) asparagine">
    <location>
        <position position="45"/>
    </location>
</feature>
<feature type="disulfide bond">
    <location>
        <begin position="8"/>
        <end position="38"/>
    </location>
</feature>
<feature type="disulfide bond">
    <location>
        <begin position="16"/>
        <end position="35"/>
    </location>
</feature>
<feature type="disulfide bond">
    <location>
        <begin position="24"/>
        <end position="56"/>
    </location>
</feature>
<feature type="non-terminal residue">
    <location>
        <position position="1"/>
    </location>
</feature>
<feature type="non-terminal residue">
    <location>
        <position position="56"/>
    </location>
</feature>